<dbReference type="EC" id="6.1.1.15" evidence="1"/>
<dbReference type="EMBL" id="CP000395">
    <property type="protein sequence ID" value="ABH01673.1"/>
    <property type="molecule type" value="Genomic_DNA"/>
</dbReference>
<dbReference type="EMBL" id="CP002933">
    <property type="protein sequence ID" value="AEL69628.1"/>
    <property type="molecule type" value="Genomic_DNA"/>
</dbReference>
<dbReference type="RefSeq" id="WP_011601003.1">
    <property type="nucleotide sequence ID" value="NZ_CP160066.1"/>
</dbReference>
<dbReference type="SMR" id="Q0SNA5"/>
<dbReference type="STRING" id="29518.BLA32_02285"/>
<dbReference type="KEGG" id="baf:BAPKO_0419"/>
<dbReference type="KEGG" id="bafz:BafPKo_0404"/>
<dbReference type="PATRIC" id="fig|390236.22.peg.397"/>
<dbReference type="eggNOG" id="COG0441">
    <property type="taxonomic scope" value="Bacteria"/>
</dbReference>
<dbReference type="HOGENOM" id="CLU_001882_4_2_12"/>
<dbReference type="OrthoDB" id="9809052at2"/>
<dbReference type="Proteomes" id="UP000005216">
    <property type="component" value="Chromosome"/>
</dbReference>
<dbReference type="GO" id="GO:0017101">
    <property type="term" value="C:aminoacyl-tRNA synthetase multienzyme complex"/>
    <property type="evidence" value="ECO:0007669"/>
    <property type="project" value="TreeGrafter"/>
</dbReference>
<dbReference type="GO" id="GO:0005737">
    <property type="term" value="C:cytoplasm"/>
    <property type="evidence" value="ECO:0007669"/>
    <property type="project" value="UniProtKB-SubCell"/>
</dbReference>
<dbReference type="GO" id="GO:0005524">
    <property type="term" value="F:ATP binding"/>
    <property type="evidence" value="ECO:0007669"/>
    <property type="project" value="UniProtKB-UniRule"/>
</dbReference>
<dbReference type="GO" id="GO:0004827">
    <property type="term" value="F:proline-tRNA ligase activity"/>
    <property type="evidence" value="ECO:0007669"/>
    <property type="project" value="UniProtKB-UniRule"/>
</dbReference>
<dbReference type="GO" id="GO:0006433">
    <property type="term" value="P:prolyl-tRNA aminoacylation"/>
    <property type="evidence" value="ECO:0007669"/>
    <property type="project" value="UniProtKB-UniRule"/>
</dbReference>
<dbReference type="CDD" id="cd00862">
    <property type="entry name" value="ProRS_anticodon_zinc"/>
    <property type="match status" value="1"/>
</dbReference>
<dbReference type="CDD" id="cd00778">
    <property type="entry name" value="ProRS_core_arch_euk"/>
    <property type="match status" value="1"/>
</dbReference>
<dbReference type="FunFam" id="3.30.930.10:FF:000023">
    <property type="entry name" value="Proline--tRNA ligase"/>
    <property type="match status" value="1"/>
</dbReference>
<dbReference type="Gene3D" id="3.40.50.800">
    <property type="entry name" value="Anticodon-binding domain"/>
    <property type="match status" value="1"/>
</dbReference>
<dbReference type="Gene3D" id="3.30.930.10">
    <property type="entry name" value="Bira Bifunctional Protein, Domain 2"/>
    <property type="match status" value="1"/>
</dbReference>
<dbReference type="Gene3D" id="3.30.110.30">
    <property type="entry name" value="C-terminal domain of ProRS"/>
    <property type="match status" value="1"/>
</dbReference>
<dbReference type="HAMAP" id="MF_01571">
    <property type="entry name" value="Pro_tRNA_synth_type3"/>
    <property type="match status" value="1"/>
</dbReference>
<dbReference type="InterPro" id="IPR002314">
    <property type="entry name" value="aa-tRNA-synt_IIb"/>
</dbReference>
<dbReference type="InterPro" id="IPR006195">
    <property type="entry name" value="aa-tRNA-synth_II"/>
</dbReference>
<dbReference type="InterPro" id="IPR045864">
    <property type="entry name" value="aa-tRNA-synth_II/BPL/LPL"/>
</dbReference>
<dbReference type="InterPro" id="IPR004154">
    <property type="entry name" value="Anticodon-bd"/>
</dbReference>
<dbReference type="InterPro" id="IPR036621">
    <property type="entry name" value="Anticodon-bd_dom_sf"/>
</dbReference>
<dbReference type="InterPro" id="IPR002316">
    <property type="entry name" value="Pro-tRNA-ligase_IIa"/>
</dbReference>
<dbReference type="InterPro" id="IPR004499">
    <property type="entry name" value="Pro-tRNA-ligase_IIa_arc-type"/>
</dbReference>
<dbReference type="InterPro" id="IPR016061">
    <property type="entry name" value="Pro-tRNA_ligase_II_C"/>
</dbReference>
<dbReference type="InterPro" id="IPR017449">
    <property type="entry name" value="Pro-tRNA_synth_II"/>
</dbReference>
<dbReference type="InterPro" id="IPR033721">
    <property type="entry name" value="ProRS_core_arch_euk"/>
</dbReference>
<dbReference type="NCBIfam" id="TIGR00408">
    <property type="entry name" value="proS_fam_I"/>
    <property type="match status" value="1"/>
</dbReference>
<dbReference type="PANTHER" id="PTHR43382:SF2">
    <property type="entry name" value="BIFUNCTIONAL GLUTAMATE_PROLINE--TRNA LIGASE"/>
    <property type="match status" value="1"/>
</dbReference>
<dbReference type="PANTHER" id="PTHR43382">
    <property type="entry name" value="PROLYL-TRNA SYNTHETASE"/>
    <property type="match status" value="1"/>
</dbReference>
<dbReference type="Pfam" id="PF03129">
    <property type="entry name" value="HGTP_anticodon"/>
    <property type="match status" value="1"/>
</dbReference>
<dbReference type="Pfam" id="PF09180">
    <property type="entry name" value="ProRS-C_1"/>
    <property type="match status" value="1"/>
</dbReference>
<dbReference type="Pfam" id="PF00587">
    <property type="entry name" value="tRNA-synt_2b"/>
    <property type="match status" value="1"/>
</dbReference>
<dbReference type="PRINTS" id="PR01046">
    <property type="entry name" value="TRNASYNTHPRO"/>
</dbReference>
<dbReference type="SMART" id="SM00946">
    <property type="entry name" value="ProRS-C_1"/>
    <property type="match status" value="1"/>
</dbReference>
<dbReference type="SUPFAM" id="SSF64586">
    <property type="entry name" value="C-terminal domain of ProRS"/>
    <property type="match status" value="1"/>
</dbReference>
<dbReference type="SUPFAM" id="SSF52954">
    <property type="entry name" value="Class II aaRS ABD-related"/>
    <property type="match status" value="1"/>
</dbReference>
<dbReference type="SUPFAM" id="SSF55681">
    <property type="entry name" value="Class II aaRS and biotin synthetases"/>
    <property type="match status" value="1"/>
</dbReference>
<dbReference type="PROSITE" id="PS50862">
    <property type="entry name" value="AA_TRNA_LIGASE_II"/>
    <property type="match status" value="1"/>
</dbReference>
<proteinExistence type="inferred from homology"/>
<evidence type="ECO:0000255" key="1">
    <source>
        <dbReference type="HAMAP-Rule" id="MF_01571"/>
    </source>
</evidence>
<reference key="1">
    <citation type="journal article" date="2006" name="BMC Genomics">
        <title>Comparative genome analysis: selection pressure on the Borrelia vls cassettes is essential for infectivity.</title>
        <authorList>
            <person name="Gloeckner G."/>
            <person name="Schulte-Spechtel U."/>
            <person name="Schilhabel M."/>
            <person name="Felder M."/>
            <person name="Suehnel J."/>
            <person name="Wilske B."/>
            <person name="Platzer M."/>
        </authorList>
    </citation>
    <scope>NUCLEOTIDE SEQUENCE [LARGE SCALE GENOMIC DNA]</scope>
    <source>
        <strain>PKo</strain>
    </source>
</reference>
<reference key="2">
    <citation type="journal article" date="2011" name="J. Bacteriol.">
        <title>Whole-genome sequences of two Borrelia afzelii and two Borrelia garinii Lyme disease agent isolates.</title>
        <authorList>
            <person name="Casjens S.R."/>
            <person name="Mongodin E.F."/>
            <person name="Qiu W.G."/>
            <person name="Dunn J.J."/>
            <person name="Luft B.J."/>
            <person name="Fraser-Liggett C.M."/>
            <person name="Schutzer S.E."/>
        </authorList>
    </citation>
    <scope>NUCLEOTIDE SEQUENCE [LARGE SCALE GENOMIC DNA]</scope>
    <source>
        <strain>PKo</strain>
    </source>
</reference>
<sequence>MSDFIASKEDDYSKWYLDIVQKAKLADYSPVKGCMVIMPYGYSIWSKIQSILDKKFKETGHENAYFPMLIPYGFLEKEKDHIDGFSPEFAIIKDAGGESLVEPLVLRPTSETIIWNMYSKWIKSYRDLPLKINQWANVIRWEKRTRPFLRTTEFLWQEGHTAHATEEEALEETLLILDVYKRFMEDYLAIPVFCGKKSENEKFAGAVSTYSVEALMQDKKALQAATSHYLGLNFAKAFDVKFQDKDGKMKHVFASSWGVSTRLIGALIMVHSDEKGLILPPRIAPVEIIVIPIFKKEDEINKKILDYSDCVVHTLKKAEFRVEIDKDVRSSPGFRFSSAEFKGIPIRIEVGINDILLNSVTIIRRDKDRKFKYQISLDSLVSKVRVELDSMQKDLFKKALNFRTLNTKEIFRSGKDSYELFKAYVNDYSGFVLSCWCGGLNCENIIKNETKATIRCIPDDFKARDLTGMTCIYCSSKAKYYVLFAKSY</sequence>
<keyword id="KW-0030">Aminoacyl-tRNA synthetase</keyword>
<keyword id="KW-0067">ATP-binding</keyword>
<keyword id="KW-0963">Cytoplasm</keyword>
<keyword id="KW-0436">Ligase</keyword>
<keyword id="KW-0547">Nucleotide-binding</keyword>
<keyword id="KW-0648">Protein biosynthesis</keyword>
<organism>
    <name type="scientific">Borreliella afzelii (strain PKo)</name>
    <name type="common">Borrelia afzelii</name>
    <dbReference type="NCBI Taxonomy" id="390236"/>
    <lineage>
        <taxon>Bacteria</taxon>
        <taxon>Pseudomonadati</taxon>
        <taxon>Spirochaetota</taxon>
        <taxon>Spirochaetia</taxon>
        <taxon>Spirochaetales</taxon>
        <taxon>Borreliaceae</taxon>
        <taxon>Borreliella</taxon>
    </lineage>
</organism>
<protein>
    <recommendedName>
        <fullName evidence="1">Proline--tRNA ligase</fullName>
        <ecNumber evidence="1">6.1.1.15</ecNumber>
    </recommendedName>
    <alternativeName>
        <fullName evidence="1">Prolyl-tRNA synthetase</fullName>
        <shortName evidence="1">ProRS</shortName>
    </alternativeName>
</protein>
<accession>Q0SNA5</accession>
<accession>G0IS47</accession>
<feature type="chain" id="PRO_0000288404" description="Proline--tRNA ligase">
    <location>
        <begin position="1"/>
        <end position="488"/>
    </location>
</feature>
<name>SYP_BORAP</name>
<gene>
    <name evidence="1" type="primary">proS</name>
    <name type="ordered locus">BAPKO_0419</name>
    <name type="ordered locus">BafPKo_0404</name>
</gene>
<comment type="function">
    <text evidence="1">Catalyzes the attachment of proline to tRNA(Pro) in a two-step reaction: proline is first activated by ATP to form Pro-AMP and then transferred to the acceptor end of tRNA(Pro).</text>
</comment>
<comment type="catalytic activity">
    <reaction evidence="1">
        <text>tRNA(Pro) + L-proline + ATP = L-prolyl-tRNA(Pro) + AMP + diphosphate</text>
        <dbReference type="Rhea" id="RHEA:14305"/>
        <dbReference type="Rhea" id="RHEA-COMP:9700"/>
        <dbReference type="Rhea" id="RHEA-COMP:9702"/>
        <dbReference type="ChEBI" id="CHEBI:30616"/>
        <dbReference type="ChEBI" id="CHEBI:33019"/>
        <dbReference type="ChEBI" id="CHEBI:60039"/>
        <dbReference type="ChEBI" id="CHEBI:78442"/>
        <dbReference type="ChEBI" id="CHEBI:78532"/>
        <dbReference type="ChEBI" id="CHEBI:456215"/>
        <dbReference type="EC" id="6.1.1.15"/>
    </reaction>
</comment>
<comment type="subunit">
    <text evidence="1">Homodimer.</text>
</comment>
<comment type="subcellular location">
    <subcellularLocation>
        <location evidence="1">Cytoplasm</location>
    </subcellularLocation>
</comment>
<comment type="domain">
    <text evidence="1">Consists of three domains: the N-terminal catalytic domain, the anticodon-binding domain and the C-terminal extension.</text>
</comment>
<comment type="similarity">
    <text evidence="1">Belongs to the class-II aminoacyl-tRNA synthetase family. ProS type 3 subfamily.</text>
</comment>